<keyword id="KW-0119">Carbohydrate metabolism</keyword>
<keyword id="KW-0378">Hydrolase</keyword>
<name>NAGB_STRE4</name>
<comment type="function">
    <text evidence="1">Catalyzes the reversible isomerization-deamination of glucosamine 6-phosphate (GlcN6P) to form fructose 6-phosphate (Fru6P) and ammonium ion.</text>
</comment>
<comment type="catalytic activity">
    <reaction evidence="1">
        <text>alpha-D-glucosamine 6-phosphate + H2O = beta-D-fructose 6-phosphate + NH4(+)</text>
        <dbReference type="Rhea" id="RHEA:12172"/>
        <dbReference type="ChEBI" id="CHEBI:15377"/>
        <dbReference type="ChEBI" id="CHEBI:28938"/>
        <dbReference type="ChEBI" id="CHEBI:57634"/>
        <dbReference type="ChEBI" id="CHEBI:75989"/>
        <dbReference type="EC" id="3.5.99.6"/>
    </reaction>
</comment>
<comment type="pathway">
    <text evidence="1">Amino-sugar metabolism; N-acetylneuraminate degradation; D-fructose 6-phosphate from N-acetylneuraminate: step 5/5.</text>
</comment>
<comment type="similarity">
    <text evidence="1">Belongs to the glucosamine/galactosamine-6-phosphate isomerase family. NagB subfamily.</text>
</comment>
<reference key="1">
    <citation type="journal article" date="2009" name="PLoS Pathog.">
        <title>Genomic evidence for the evolution of Streptococcus equi: host restriction, increased virulence, and genetic exchange with human pathogens.</title>
        <authorList>
            <person name="Holden M.T.G."/>
            <person name="Heather Z."/>
            <person name="Paillot R."/>
            <person name="Steward K.F."/>
            <person name="Webb K."/>
            <person name="Ainslie F."/>
            <person name="Jourdan T."/>
            <person name="Bason N.C."/>
            <person name="Holroyd N.E."/>
            <person name="Mungall K."/>
            <person name="Quail M.A."/>
            <person name="Sanders M."/>
            <person name="Simmonds M."/>
            <person name="Willey D."/>
            <person name="Brooks K."/>
            <person name="Aanensen D.M."/>
            <person name="Spratt B.G."/>
            <person name="Jolley K.A."/>
            <person name="Maiden M.C.J."/>
            <person name="Kehoe M."/>
            <person name="Chanter N."/>
            <person name="Bentley S.D."/>
            <person name="Robinson C."/>
            <person name="Maskell D.J."/>
            <person name="Parkhill J."/>
            <person name="Waller A.S."/>
        </authorList>
    </citation>
    <scope>NUCLEOTIDE SEQUENCE [LARGE SCALE GENOMIC DNA]</scope>
    <source>
        <strain>4047</strain>
    </source>
</reference>
<accession>C0M970</accession>
<feature type="chain" id="PRO_1000165025" description="Glucosamine-6-phosphate deaminase">
    <location>
        <begin position="1"/>
        <end position="234"/>
    </location>
</feature>
<feature type="active site" description="Proton acceptor; for enolization step" evidence="1">
    <location>
        <position position="62"/>
    </location>
</feature>
<feature type="active site" description="For ring-opening step" evidence="1">
    <location>
        <position position="128"/>
    </location>
</feature>
<feature type="active site" description="Proton acceptor; for ring-opening step" evidence="1">
    <location>
        <position position="130"/>
    </location>
</feature>
<feature type="active site" description="For ring-opening step" evidence="1">
    <location>
        <position position="135"/>
    </location>
</feature>
<evidence type="ECO:0000255" key="1">
    <source>
        <dbReference type="HAMAP-Rule" id="MF_01241"/>
    </source>
</evidence>
<gene>
    <name evidence="1" type="primary">nagB</name>
    <name type="ordered locus">SEQ_0683</name>
</gene>
<dbReference type="EC" id="3.5.99.6" evidence="1"/>
<dbReference type="EMBL" id="FM204883">
    <property type="protein sequence ID" value="CAW93031.1"/>
    <property type="molecule type" value="Genomic_DNA"/>
</dbReference>
<dbReference type="RefSeq" id="WP_012679214.1">
    <property type="nucleotide sequence ID" value="NC_012471.1"/>
</dbReference>
<dbReference type="SMR" id="C0M970"/>
<dbReference type="KEGG" id="seu:SEQ_0683"/>
<dbReference type="HOGENOM" id="CLU_049611_1_0_9"/>
<dbReference type="OrthoDB" id="9791139at2"/>
<dbReference type="UniPathway" id="UPA00629">
    <property type="reaction ID" value="UER00684"/>
</dbReference>
<dbReference type="Proteomes" id="UP000001365">
    <property type="component" value="Chromosome"/>
</dbReference>
<dbReference type="GO" id="GO:0005737">
    <property type="term" value="C:cytoplasm"/>
    <property type="evidence" value="ECO:0007669"/>
    <property type="project" value="TreeGrafter"/>
</dbReference>
<dbReference type="GO" id="GO:0004342">
    <property type="term" value="F:glucosamine-6-phosphate deaminase activity"/>
    <property type="evidence" value="ECO:0007669"/>
    <property type="project" value="UniProtKB-UniRule"/>
</dbReference>
<dbReference type="GO" id="GO:0042802">
    <property type="term" value="F:identical protein binding"/>
    <property type="evidence" value="ECO:0007669"/>
    <property type="project" value="TreeGrafter"/>
</dbReference>
<dbReference type="GO" id="GO:0005975">
    <property type="term" value="P:carbohydrate metabolic process"/>
    <property type="evidence" value="ECO:0007669"/>
    <property type="project" value="InterPro"/>
</dbReference>
<dbReference type="GO" id="GO:0006043">
    <property type="term" value="P:glucosamine catabolic process"/>
    <property type="evidence" value="ECO:0007669"/>
    <property type="project" value="TreeGrafter"/>
</dbReference>
<dbReference type="GO" id="GO:0006046">
    <property type="term" value="P:N-acetylglucosamine catabolic process"/>
    <property type="evidence" value="ECO:0007669"/>
    <property type="project" value="TreeGrafter"/>
</dbReference>
<dbReference type="GO" id="GO:0019262">
    <property type="term" value="P:N-acetylneuraminate catabolic process"/>
    <property type="evidence" value="ECO:0007669"/>
    <property type="project" value="UniProtKB-UniRule"/>
</dbReference>
<dbReference type="CDD" id="cd01399">
    <property type="entry name" value="GlcN6P_deaminase"/>
    <property type="match status" value="1"/>
</dbReference>
<dbReference type="FunFam" id="3.40.50.1360:FF:000003">
    <property type="entry name" value="Glucosamine-6-phosphate deaminase"/>
    <property type="match status" value="1"/>
</dbReference>
<dbReference type="Gene3D" id="3.40.50.1360">
    <property type="match status" value="1"/>
</dbReference>
<dbReference type="HAMAP" id="MF_01241">
    <property type="entry name" value="GlcN6P_deamin"/>
    <property type="match status" value="1"/>
</dbReference>
<dbReference type="InterPro" id="IPR006148">
    <property type="entry name" value="Glc/Gal-6P_isomerase"/>
</dbReference>
<dbReference type="InterPro" id="IPR004547">
    <property type="entry name" value="Glucosamine6P_isomerase"/>
</dbReference>
<dbReference type="InterPro" id="IPR018321">
    <property type="entry name" value="Glucosamine6P_isomerase_CS"/>
</dbReference>
<dbReference type="InterPro" id="IPR037171">
    <property type="entry name" value="NagB/RpiA_transferase-like"/>
</dbReference>
<dbReference type="NCBIfam" id="TIGR00502">
    <property type="entry name" value="nagB"/>
    <property type="match status" value="1"/>
</dbReference>
<dbReference type="PANTHER" id="PTHR11280">
    <property type="entry name" value="GLUCOSAMINE-6-PHOSPHATE ISOMERASE"/>
    <property type="match status" value="1"/>
</dbReference>
<dbReference type="PANTHER" id="PTHR11280:SF5">
    <property type="entry name" value="GLUCOSAMINE-6-PHOSPHATE ISOMERASE"/>
    <property type="match status" value="1"/>
</dbReference>
<dbReference type="Pfam" id="PF01182">
    <property type="entry name" value="Glucosamine_iso"/>
    <property type="match status" value="1"/>
</dbReference>
<dbReference type="SUPFAM" id="SSF100950">
    <property type="entry name" value="NagB/RpiA/CoA transferase-like"/>
    <property type="match status" value="1"/>
</dbReference>
<dbReference type="PROSITE" id="PS01161">
    <property type="entry name" value="GLC_GALNAC_ISOMERASE"/>
    <property type="match status" value="1"/>
</dbReference>
<organism>
    <name type="scientific">Streptococcus equi subsp. equi (strain 4047)</name>
    <dbReference type="NCBI Taxonomy" id="553482"/>
    <lineage>
        <taxon>Bacteria</taxon>
        <taxon>Bacillati</taxon>
        <taxon>Bacillota</taxon>
        <taxon>Bacilli</taxon>
        <taxon>Lactobacillales</taxon>
        <taxon>Streptococcaceae</taxon>
        <taxon>Streptococcus</taxon>
    </lineage>
</organism>
<protein>
    <recommendedName>
        <fullName evidence="1">Glucosamine-6-phosphate deaminase</fullName>
        <ecNumber evidence="1">3.5.99.6</ecNumber>
    </recommendedName>
    <alternativeName>
        <fullName evidence="1">GlcN6P deaminase</fullName>
        <shortName evidence="1">GNPDA</shortName>
    </alternativeName>
    <alternativeName>
        <fullName evidence="1">Glucosamine-6-phosphate isomerase</fullName>
    </alternativeName>
</protein>
<sequence length="234" mass="25299">MKIIRVQDQLEGGKVAFSLLKESLAKGATTLGLATGSTPITFYQELVNSDLDCSALTSINLDEYVGLPVENDQSYDYFMRDQLFNAKPFKESFLPNGLADDLEAEVKRYDQVIAEHPIDFQILGIGRNGHIGFNEPGTSFAEKTHVVDLQASTIEANSRFFASIDDVPKQAISMGIASIMASKMIVLLAFGKEKAAAIKGMVSGPVTEALPASVLQQHDNVVVIIDEAAASELD</sequence>
<proteinExistence type="inferred from homology"/>